<comment type="function">
    <text evidence="1">Succinyl-CoA synthetase functions in the citric acid cycle (TCA), coupling the hydrolysis of succinyl-CoA to the synthesis of either ATP or GTP and thus represents the only step of substrate-level phosphorylation in the TCA. The beta subunit provides nucleotide specificity of the enzyme and binds the substrate succinate, while the binding sites for coenzyme A and phosphate are found in the alpha subunit.</text>
</comment>
<comment type="catalytic activity">
    <reaction evidence="1">
        <text>succinate + ATP + CoA = succinyl-CoA + ADP + phosphate</text>
        <dbReference type="Rhea" id="RHEA:17661"/>
        <dbReference type="ChEBI" id="CHEBI:30031"/>
        <dbReference type="ChEBI" id="CHEBI:30616"/>
        <dbReference type="ChEBI" id="CHEBI:43474"/>
        <dbReference type="ChEBI" id="CHEBI:57287"/>
        <dbReference type="ChEBI" id="CHEBI:57292"/>
        <dbReference type="ChEBI" id="CHEBI:456216"/>
        <dbReference type="EC" id="6.2.1.5"/>
    </reaction>
    <physiologicalReaction direction="right-to-left" evidence="1">
        <dbReference type="Rhea" id="RHEA:17663"/>
    </physiologicalReaction>
</comment>
<comment type="catalytic activity">
    <reaction evidence="1">
        <text>GTP + succinate + CoA = succinyl-CoA + GDP + phosphate</text>
        <dbReference type="Rhea" id="RHEA:22120"/>
        <dbReference type="ChEBI" id="CHEBI:30031"/>
        <dbReference type="ChEBI" id="CHEBI:37565"/>
        <dbReference type="ChEBI" id="CHEBI:43474"/>
        <dbReference type="ChEBI" id="CHEBI:57287"/>
        <dbReference type="ChEBI" id="CHEBI:57292"/>
        <dbReference type="ChEBI" id="CHEBI:58189"/>
    </reaction>
    <physiologicalReaction direction="right-to-left" evidence="1">
        <dbReference type="Rhea" id="RHEA:22122"/>
    </physiologicalReaction>
</comment>
<comment type="cofactor">
    <cofactor evidence="1">
        <name>Mg(2+)</name>
        <dbReference type="ChEBI" id="CHEBI:18420"/>
    </cofactor>
    <text evidence="1">Binds 1 Mg(2+) ion per subunit.</text>
</comment>
<comment type="pathway">
    <text evidence="1">Carbohydrate metabolism; tricarboxylic acid cycle; succinate from succinyl-CoA (ligase route): step 1/1.</text>
</comment>
<comment type="subunit">
    <text evidence="1">Heterotetramer of two alpha and two beta subunits.</text>
</comment>
<comment type="similarity">
    <text evidence="1">Belongs to the succinate/malate CoA ligase beta subunit family.</text>
</comment>
<evidence type="ECO:0000255" key="1">
    <source>
        <dbReference type="HAMAP-Rule" id="MF_00558"/>
    </source>
</evidence>
<reference key="1">
    <citation type="submission" date="2006-12" db="EMBL/GenBank/DDBJ databases">
        <title>Complete sequence of Shewanella sp. W3-18-1.</title>
        <authorList>
            <consortium name="US DOE Joint Genome Institute"/>
            <person name="Copeland A."/>
            <person name="Lucas S."/>
            <person name="Lapidus A."/>
            <person name="Barry K."/>
            <person name="Detter J.C."/>
            <person name="Glavina del Rio T."/>
            <person name="Hammon N."/>
            <person name="Israni S."/>
            <person name="Dalin E."/>
            <person name="Tice H."/>
            <person name="Pitluck S."/>
            <person name="Chain P."/>
            <person name="Malfatti S."/>
            <person name="Shin M."/>
            <person name="Vergez L."/>
            <person name="Schmutz J."/>
            <person name="Larimer F."/>
            <person name="Land M."/>
            <person name="Hauser L."/>
            <person name="Kyrpides N."/>
            <person name="Lykidis A."/>
            <person name="Tiedje J."/>
            <person name="Richardson P."/>
        </authorList>
    </citation>
    <scope>NUCLEOTIDE SEQUENCE [LARGE SCALE GENOMIC DNA]</scope>
    <source>
        <strain>W3-18-1</strain>
    </source>
</reference>
<protein>
    <recommendedName>
        <fullName evidence="1">Succinate--CoA ligase [ADP-forming] subunit beta</fullName>
        <ecNumber evidence="1">6.2.1.5</ecNumber>
    </recommendedName>
    <alternativeName>
        <fullName evidence="1">Succinyl-CoA synthetase subunit beta</fullName>
        <shortName evidence="1">SCS-beta</shortName>
    </alternativeName>
</protein>
<proteinExistence type="inferred from homology"/>
<gene>
    <name evidence="1" type="primary">sucC</name>
    <name type="ordered locus">Sputw3181_1741</name>
</gene>
<name>SUCC_SHESW</name>
<organism>
    <name type="scientific">Shewanella sp. (strain W3-18-1)</name>
    <dbReference type="NCBI Taxonomy" id="351745"/>
    <lineage>
        <taxon>Bacteria</taxon>
        <taxon>Pseudomonadati</taxon>
        <taxon>Pseudomonadota</taxon>
        <taxon>Gammaproteobacteria</taxon>
        <taxon>Alteromonadales</taxon>
        <taxon>Shewanellaceae</taxon>
        <taxon>Shewanella</taxon>
    </lineage>
</organism>
<feature type="chain" id="PRO_1000082231" description="Succinate--CoA ligase [ADP-forming] subunit beta">
    <location>
        <begin position="1"/>
        <end position="388"/>
    </location>
</feature>
<feature type="domain" description="ATP-grasp" evidence="1">
    <location>
        <begin position="9"/>
        <end position="244"/>
    </location>
</feature>
<feature type="binding site" evidence="1">
    <location>
        <position position="46"/>
    </location>
    <ligand>
        <name>ATP</name>
        <dbReference type="ChEBI" id="CHEBI:30616"/>
    </ligand>
</feature>
<feature type="binding site" evidence="1">
    <location>
        <begin position="53"/>
        <end position="55"/>
    </location>
    <ligand>
        <name>ATP</name>
        <dbReference type="ChEBI" id="CHEBI:30616"/>
    </ligand>
</feature>
<feature type="binding site" evidence="1">
    <location>
        <position position="99"/>
    </location>
    <ligand>
        <name>ATP</name>
        <dbReference type="ChEBI" id="CHEBI:30616"/>
    </ligand>
</feature>
<feature type="binding site" evidence="1">
    <location>
        <position position="102"/>
    </location>
    <ligand>
        <name>ATP</name>
        <dbReference type="ChEBI" id="CHEBI:30616"/>
    </ligand>
</feature>
<feature type="binding site" evidence="1">
    <location>
        <position position="107"/>
    </location>
    <ligand>
        <name>ATP</name>
        <dbReference type="ChEBI" id="CHEBI:30616"/>
    </ligand>
</feature>
<feature type="binding site" evidence="1">
    <location>
        <position position="199"/>
    </location>
    <ligand>
        <name>Mg(2+)</name>
        <dbReference type="ChEBI" id="CHEBI:18420"/>
    </ligand>
</feature>
<feature type="binding site" evidence="1">
    <location>
        <position position="213"/>
    </location>
    <ligand>
        <name>Mg(2+)</name>
        <dbReference type="ChEBI" id="CHEBI:18420"/>
    </ligand>
</feature>
<feature type="binding site" evidence="1">
    <location>
        <position position="264"/>
    </location>
    <ligand>
        <name>substrate</name>
        <note>ligand shared with subunit alpha</note>
    </ligand>
</feature>
<feature type="binding site" evidence="1">
    <location>
        <begin position="321"/>
        <end position="323"/>
    </location>
    <ligand>
        <name>substrate</name>
        <note>ligand shared with subunit alpha</note>
    </ligand>
</feature>
<sequence>MNLHEYQAKSLFAEYGLPVSEGFACDTAQEAVEAAGRIGGNLWVVKCQVHAGGRGKAGGVKVTGDKEEIRAFAEHWLGKNLVTYQTDEKGQPVAKILVESCTDIANELYLGAVVDRSTRRVVFMASTEGGVEIEKVAEETPELIHKAIIDPLTGPQPYQARDLGFKLGLNPTQMKQFTKIFMGLATMFVDHDFALLEINPLVITTEGNLHCLDGKIGIDGNALFRQPKVKAMHDPSQDDAREAHAAMFELNYVALDGNVGCMVNGAGLAMGTMDIVNLHGGKPANFLDVGGGATKERVAEAFKIILSDSNVKAVLVNIFGGIVRCDMIAEGIIGAVKEVGVKVPVVVRLEGTNAELGREVLAKSGLDIIAATSLTDAAERVVKAAEGK</sequence>
<dbReference type="EC" id="6.2.1.5" evidence="1"/>
<dbReference type="EMBL" id="CP000503">
    <property type="protein sequence ID" value="ABM24578.1"/>
    <property type="molecule type" value="Genomic_DNA"/>
</dbReference>
<dbReference type="RefSeq" id="WP_011789075.1">
    <property type="nucleotide sequence ID" value="NC_008750.1"/>
</dbReference>
<dbReference type="SMR" id="A1RIT3"/>
<dbReference type="GeneID" id="67443801"/>
<dbReference type="KEGG" id="shw:Sputw3181_1741"/>
<dbReference type="HOGENOM" id="CLU_037430_0_2_6"/>
<dbReference type="UniPathway" id="UPA00223">
    <property type="reaction ID" value="UER00999"/>
</dbReference>
<dbReference type="Proteomes" id="UP000002597">
    <property type="component" value="Chromosome"/>
</dbReference>
<dbReference type="GO" id="GO:0005829">
    <property type="term" value="C:cytosol"/>
    <property type="evidence" value="ECO:0007669"/>
    <property type="project" value="TreeGrafter"/>
</dbReference>
<dbReference type="GO" id="GO:0042709">
    <property type="term" value="C:succinate-CoA ligase complex"/>
    <property type="evidence" value="ECO:0007669"/>
    <property type="project" value="TreeGrafter"/>
</dbReference>
<dbReference type="GO" id="GO:0005524">
    <property type="term" value="F:ATP binding"/>
    <property type="evidence" value="ECO:0007669"/>
    <property type="project" value="UniProtKB-UniRule"/>
</dbReference>
<dbReference type="GO" id="GO:0000287">
    <property type="term" value="F:magnesium ion binding"/>
    <property type="evidence" value="ECO:0007669"/>
    <property type="project" value="UniProtKB-UniRule"/>
</dbReference>
<dbReference type="GO" id="GO:0004775">
    <property type="term" value="F:succinate-CoA ligase (ADP-forming) activity"/>
    <property type="evidence" value="ECO:0007669"/>
    <property type="project" value="UniProtKB-UniRule"/>
</dbReference>
<dbReference type="GO" id="GO:0004776">
    <property type="term" value="F:succinate-CoA ligase (GDP-forming) activity"/>
    <property type="evidence" value="ECO:0007669"/>
    <property type="project" value="RHEA"/>
</dbReference>
<dbReference type="GO" id="GO:0006104">
    <property type="term" value="P:succinyl-CoA metabolic process"/>
    <property type="evidence" value="ECO:0007669"/>
    <property type="project" value="TreeGrafter"/>
</dbReference>
<dbReference type="GO" id="GO:0006099">
    <property type="term" value="P:tricarboxylic acid cycle"/>
    <property type="evidence" value="ECO:0007669"/>
    <property type="project" value="UniProtKB-UniRule"/>
</dbReference>
<dbReference type="FunFam" id="3.30.1490.20:FF:000002">
    <property type="entry name" value="Succinate--CoA ligase [ADP-forming] subunit beta"/>
    <property type="match status" value="1"/>
</dbReference>
<dbReference type="FunFam" id="3.30.470.20:FF:000002">
    <property type="entry name" value="Succinate--CoA ligase [ADP-forming] subunit beta"/>
    <property type="match status" value="1"/>
</dbReference>
<dbReference type="FunFam" id="3.40.50.261:FF:000001">
    <property type="entry name" value="Succinate--CoA ligase [ADP-forming] subunit beta"/>
    <property type="match status" value="1"/>
</dbReference>
<dbReference type="Gene3D" id="3.30.1490.20">
    <property type="entry name" value="ATP-grasp fold, A domain"/>
    <property type="match status" value="1"/>
</dbReference>
<dbReference type="Gene3D" id="3.30.470.20">
    <property type="entry name" value="ATP-grasp fold, B domain"/>
    <property type="match status" value="1"/>
</dbReference>
<dbReference type="Gene3D" id="3.40.50.261">
    <property type="entry name" value="Succinyl-CoA synthetase domains"/>
    <property type="match status" value="1"/>
</dbReference>
<dbReference type="HAMAP" id="MF_00558">
    <property type="entry name" value="Succ_CoA_beta"/>
    <property type="match status" value="1"/>
</dbReference>
<dbReference type="InterPro" id="IPR011761">
    <property type="entry name" value="ATP-grasp"/>
</dbReference>
<dbReference type="InterPro" id="IPR013650">
    <property type="entry name" value="ATP-grasp_succ-CoA_synth-type"/>
</dbReference>
<dbReference type="InterPro" id="IPR013815">
    <property type="entry name" value="ATP_grasp_subdomain_1"/>
</dbReference>
<dbReference type="InterPro" id="IPR017866">
    <property type="entry name" value="Succ-CoA_synthase_bsu_CS"/>
</dbReference>
<dbReference type="InterPro" id="IPR005811">
    <property type="entry name" value="SUCC_ACL_C"/>
</dbReference>
<dbReference type="InterPro" id="IPR005809">
    <property type="entry name" value="Succ_CoA_ligase-like_bsu"/>
</dbReference>
<dbReference type="InterPro" id="IPR016102">
    <property type="entry name" value="Succinyl-CoA_synth-like"/>
</dbReference>
<dbReference type="NCBIfam" id="NF001913">
    <property type="entry name" value="PRK00696.1"/>
    <property type="match status" value="1"/>
</dbReference>
<dbReference type="NCBIfam" id="TIGR01016">
    <property type="entry name" value="sucCoAbeta"/>
    <property type="match status" value="1"/>
</dbReference>
<dbReference type="PANTHER" id="PTHR11815:SF10">
    <property type="entry name" value="SUCCINATE--COA LIGASE [GDP-FORMING] SUBUNIT BETA, MITOCHONDRIAL"/>
    <property type="match status" value="1"/>
</dbReference>
<dbReference type="PANTHER" id="PTHR11815">
    <property type="entry name" value="SUCCINYL-COA SYNTHETASE BETA CHAIN"/>
    <property type="match status" value="1"/>
</dbReference>
<dbReference type="Pfam" id="PF08442">
    <property type="entry name" value="ATP-grasp_2"/>
    <property type="match status" value="1"/>
</dbReference>
<dbReference type="Pfam" id="PF00549">
    <property type="entry name" value="Ligase_CoA"/>
    <property type="match status" value="1"/>
</dbReference>
<dbReference type="PIRSF" id="PIRSF001554">
    <property type="entry name" value="SucCS_beta"/>
    <property type="match status" value="1"/>
</dbReference>
<dbReference type="SUPFAM" id="SSF56059">
    <property type="entry name" value="Glutathione synthetase ATP-binding domain-like"/>
    <property type="match status" value="1"/>
</dbReference>
<dbReference type="SUPFAM" id="SSF52210">
    <property type="entry name" value="Succinyl-CoA synthetase domains"/>
    <property type="match status" value="1"/>
</dbReference>
<dbReference type="PROSITE" id="PS50975">
    <property type="entry name" value="ATP_GRASP"/>
    <property type="match status" value="1"/>
</dbReference>
<dbReference type="PROSITE" id="PS01217">
    <property type="entry name" value="SUCCINYL_COA_LIG_3"/>
    <property type="match status" value="1"/>
</dbReference>
<accession>A1RIT3</accession>
<keyword id="KW-0067">ATP-binding</keyword>
<keyword id="KW-0436">Ligase</keyword>
<keyword id="KW-0460">Magnesium</keyword>
<keyword id="KW-0479">Metal-binding</keyword>
<keyword id="KW-0547">Nucleotide-binding</keyword>
<keyword id="KW-0816">Tricarboxylic acid cycle</keyword>